<sequence length="477" mass="50883">MYSLLIALLCAGTAVDAQALQQRQAGTTLTVDLSTTYQRIDGFGTSEAFQRAVQMSRLPEEGQRRALDVLFSTTNGAGLSILRNGIGSSPDMSSDHMVSIAPKSPGSPNNPLIYSWDGSDNKQLWVSQEAVHTYGVKTIYADAWSAPGYMKTNGNDANGGTLCGLSGAQCASGDWRQAYADYLTKYVEFYQESNVTVTHLGFINEPELTTSYASMRFSASQAAEFIRILYPTIQKSNLTYKPTIACCDAEGWNSQAGMLGALSSVNSMFGLVTAHAYTSQPGFSMNTPHPVWMTEAADLQGAWTSAWYSYGGAGEGWTWANNVYNAIVNGNASAYLYWIGAQTGNTNSHMVHIDANAGTVEPSKRLWALGQWSRFVRPGARRVAVSGASGSLRTAAFRNEDGSVAVVVINSGGDAAVNVRLASSSSADQQPASAKAWATDNSRAIEEIQASFADGVATVNVPSRSMTTVVLYPAADA</sequence>
<accession>G2Q1N4</accession>
<dbReference type="EC" id="3.2.1.-" evidence="3"/>
<dbReference type="EMBL" id="CP003002">
    <property type="protein sequence ID" value="AEO55025.1"/>
    <property type="molecule type" value="Genomic_DNA"/>
</dbReference>
<dbReference type="RefSeq" id="XP_003660270.1">
    <property type="nucleotide sequence ID" value="XM_003660222.1"/>
</dbReference>
<dbReference type="PDB" id="7NCX">
    <property type="method" value="X-ray"/>
    <property type="resolution" value="1.36 A"/>
    <property type="chains" value="AAA=20-477"/>
</dbReference>
<dbReference type="PDB" id="7O0E">
    <property type="method" value="X-ray"/>
    <property type="resolution" value="1.85 A"/>
    <property type="chains" value="A/G=25-476"/>
</dbReference>
<dbReference type="PDB" id="8C48">
    <property type="method" value="X-ray"/>
    <property type="resolution" value="1.40 A"/>
    <property type="chains" value="A/B=20-477"/>
</dbReference>
<dbReference type="PDB" id="8CBC">
    <property type="method" value="X-ray"/>
    <property type="resolution" value="1.40 A"/>
    <property type="chains" value="A/B=24-477"/>
</dbReference>
<dbReference type="PDB" id="8P67">
    <property type="method" value="X-ray"/>
    <property type="resolution" value="1.37 A"/>
    <property type="chains" value="A/B=20-477"/>
</dbReference>
<dbReference type="PDBsum" id="7NCX"/>
<dbReference type="PDBsum" id="7O0E"/>
<dbReference type="PDBsum" id="8C48"/>
<dbReference type="PDBsum" id="8CBC"/>
<dbReference type="PDBsum" id="8P67"/>
<dbReference type="SMR" id="G2Q1N4"/>
<dbReference type="GlyCosmos" id="G2Q1N4">
    <property type="glycosylation" value="3 sites, No reported glycans"/>
</dbReference>
<dbReference type="GeneID" id="11508437"/>
<dbReference type="KEGG" id="mtm:MYCTH_38558"/>
<dbReference type="VEuPathDB" id="FungiDB:MYCTH_38558"/>
<dbReference type="eggNOG" id="KOG2566">
    <property type="taxonomic scope" value="Eukaryota"/>
</dbReference>
<dbReference type="HOGENOM" id="CLU_031530_1_0_1"/>
<dbReference type="InParanoid" id="G2Q1N4"/>
<dbReference type="OMA" id="SKRFWAF"/>
<dbReference type="OrthoDB" id="2012278at2759"/>
<dbReference type="Proteomes" id="UP000007322">
    <property type="component" value="Chromosome 1"/>
</dbReference>
<dbReference type="GO" id="GO:0005576">
    <property type="term" value="C:extracellular region"/>
    <property type="evidence" value="ECO:0007669"/>
    <property type="project" value="UniProtKB-SubCell"/>
</dbReference>
<dbReference type="GO" id="GO:0016020">
    <property type="term" value="C:membrane"/>
    <property type="evidence" value="ECO:0007669"/>
    <property type="project" value="GOC"/>
</dbReference>
<dbReference type="GO" id="GO:0004348">
    <property type="term" value="F:glucosylceramidase activity"/>
    <property type="evidence" value="ECO:0007669"/>
    <property type="project" value="InterPro"/>
</dbReference>
<dbReference type="GO" id="GO:0006680">
    <property type="term" value="P:glucosylceramide catabolic process"/>
    <property type="evidence" value="ECO:0007669"/>
    <property type="project" value="TreeGrafter"/>
</dbReference>
<dbReference type="Gene3D" id="3.20.20.80">
    <property type="entry name" value="Glycosidases"/>
    <property type="match status" value="1"/>
</dbReference>
<dbReference type="Gene3D" id="2.60.40.1180">
    <property type="entry name" value="Golgi alpha-mannosidase II"/>
    <property type="match status" value="1"/>
</dbReference>
<dbReference type="InterPro" id="IPR039514">
    <property type="entry name" value="6GAL-like"/>
</dbReference>
<dbReference type="InterPro" id="IPR033452">
    <property type="entry name" value="GH30_C"/>
</dbReference>
<dbReference type="InterPro" id="IPR001139">
    <property type="entry name" value="Glyco_hydro_30"/>
</dbReference>
<dbReference type="InterPro" id="IPR013780">
    <property type="entry name" value="Glyco_hydro_b"/>
</dbReference>
<dbReference type="InterPro" id="IPR017853">
    <property type="entry name" value="Glycoside_hydrolase_SF"/>
</dbReference>
<dbReference type="PANTHER" id="PTHR11069">
    <property type="entry name" value="GLUCOSYLCERAMIDASE"/>
    <property type="match status" value="1"/>
</dbReference>
<dbReference type="PANTHER" id="PTHR11069:SF23">
    <property type="entry name" value="LYSOSOMAL ACID GLUCOSYLCERAMIDASE"/>
    <property type="match status" value="1"/>
</dbReference>
<dbReference type="Pfam" id="PF14587">
    <property type="entry name" value="Glyco_hydr_30_2"/>
    <property type="match status" value="1"/>
</dbReference>
<dbReference type="Pfam" id="PF17189">
    <property type="entry name" value="Glyco_hydro_30C"/>
    <property type="match status" value="1"/>
</dbReference>
<dbReference type="SUPFAM" id="SSF51445">
    <property type="entry name" value="(Trans)glycosidases"/>
    <property type="match status" value="1"/>
</dbReference>
<dbReference type="SUPFAM" id="SSF51011">
    <property type="entry name" value="Glycosyl hydrolase domain"/>
    <property type="match status" value="1"/>
</dbReference>
<keyword id="KW-0002">3D-structure</keyword>
<keyword id="KW-0325">Glycoprotein</keyword>
<keyword id="KW-0378">Hydrolase</keyword>
<keyword id="KW-1185">Reference proteome</keyword>
<keyword id="KW-0964">Secreted</keyword>
<keyword id="KW-0732">Signal</keyword>
<proteinExistence type="evidence at protein level"/>
<organism>
    <name type="scientific">Thermothelomyces thermophilus (strain ATCC 42464 / BCRC 31852 / DSM 1799)</name>
    <name type="common">Sporotrichum thermophile</name>
    <dbReference type="NCBI Taxonomy" id="573729"/>
    <lineage>
        <taxon>Eukaryota</taxon>
        <taxon>Fungi</taxon>
        <taxon>Dikarya</taxon>
        <taxon>Ascomycota</taxon>
        <taxon>Pezizomycotina</taxon>
        <taxon>Sordariomycetes</taxon>
        <taxon>Sordariomycetidae</taxon>
        <taxon>Sordariales</taxon>
        <taxon>Chaetomiaceae</taxon>
        <taxon>Thermothelomyces</taxon>
    </lineage>
</organism>
<reference key="1">
    <citation type="journal article" date="2011" name="Nat. Biotechnol.">
        <title>Comparative genomic analysis of the thermophilic biomass-degrading fungi Myceliophthora thermophila and Thielavia terrestris.</title>
        <authorList>
            <person name="Berka R.M."/>
            <person name="Grigoriev I.V."/>
            <person name="Otillar R."/>
            <person name="Salamov A."/>
            <person name="Grimwood J."/>
            <person name="Reid I."/>
            <person name="Ishmael N."/>
            <person name="John T."/>
            <person name="Darmond C."/>
            <person name="Moisan M.-C."/>
            <person name="Henrissat B."/>
            <person name="Coutinho P.M."/>
            <person name="Lombard V."/>
            <person name="Natvig D.O."/>
            <person name="Lindquist E."/>
            <person name="Schmutz J."/>
            <person name="Lucas S."/>
            <person name="Harris P."/>
            <person name="Powlowski J."/>
            <person name="Bellemare A."/>
            <person name="Taylor D."/>
            <person name="Butler G."/>
            <person name="de Vries R.P."/>
            <person name="Allijn I.E."/>
            <person name="van den Brink J."/>
            <person name="Ushinsky S."/>
            <person name="Storms R."/>
            <person name="Powell A.J."/>
            <person name="Paulsen I.T."/>
            <person name="Elbourne L.D.H."/>
            <person name="Baker S.E."/>
            <person name="Magnuson J."/>
            <person name="LaBoissiere S."/>
            <person name="Clutterbuck A.J."/>
            <person name="Martinez D."/>
            <person name="Wogulis M."/>
            <person name="de Leon A.L."/>
            <person name="Rey M.W."/>
            <person name="Tsang A."/>
        </authorList>
    </citation>
    <scope>NUCLEOTIDE SEQUENCE [LARGE SCALE GENOMIC DNA]</scope>
    <source>
        <strain>ATCC 42464 / BCRC 31852 / DSM 1799</strain>
    </source>
</reference>
<reference key="2">
    <citation type="journal article" date="2019" name="Biotechnol. Biofuels">
        <title>A novel fungal GH30 xylanase with xylobiohydrolase auxiliary activity.</title>
        <authorList>
            <person name="Katsimpouras C."/>
            <person name="Dedes G."/>
            <person name="Thomaidis N.S."/>
            <person name="Topakas E."/>
        </authorList>
    </citation>
    <scope>FUNCTION</scope>
    <scope>BIOPHYSICOCHEMICAL PROPERTIES</scope>
    <scope>CATALYTIC ACTIVITY</scope>
    <scope>ACTIVITY REGULATION</scope>
    <scope>BIOTECHNOLOGY</scope>
</reference>
<gene>
    <name evidence="4" type="primary">Xyn30A</name>
    <name type="ORF">MYCTH_38558</name>
</gene>
<comment type="function">
    <text evidence="3">Xylanase exhibiting endo- and exo-xylanase activity (PubMed:31110561). Shows the highest activity toward beechwood glucuronoxylan, which consists of a beta-1,4-linked xylose backbone decorated with the methylated form of D-glucuronic acid (MeGlcA) attached directly to the main chain at xylose C2 (PubMed:31110561). Also acts against wheat arabinoxylan, a xylan without MeGlcA substituents along the main chain, but the xylanase activity is about two orders of magnitude lower than that achieved in the case of beechwood xylan (PubMed:31110561). Shows no activity against carob galactomannan, konjac glucomannan, or barley beta-glucan (PubMed:31110561). The recombinant xylanase also exhibits an exo-activity by releasing processively disaccharide units from the non-reducing end of linear and decorated xylooligosaccharides (XOS) (PubMed:31110561).</text>
</comment>
<comment type="activity regulation">
    <text evidence="3">Activity is enhanced by 10 mM Co(2+), Cu 2(2+) and Mn(2+) to levels as high as 44% (PubMed:31110561). Partial inhibition of activity from 5 to 15% is observed in the presence of the following compouinds at a centration of 10 mM (from higher inhibition to lower): EDTA &gt; Mg(2+) &gt; urea, Zn(2+) &gt; Fe(3+) (PubMed:31110561).</text>
</comment>
<comment type="biophysicochemical properties">
    <kinetics>
        <KM evidence="3">1.7 mg/ml for beechwood xylan</KM>
        <Vmax evidence="3">7.1 umol/min/mg enzyme toward beechwood xylan</Vmax>
    </kinetics>
    <phDependence>
        <text evidence="3">Optimum pH is 4.0.</text>
    </phDependence>
    <temperatureDependence>
        <text evidence="3">Optimum temperature is 50 degrees Celsius.</text>
    </temperatureDependence>
</comment>
<comment type="subcellular location">
    <subcellularLocation>
        <location evidence="6">Secreted</location>
    </subcellularLocation>
</comment>
<comment type="biotechnology">
    <text evidence="3">The recombinant xylanase could be used for the production of disaccharide units and uronic xylooligosaccharides from glucuronoxylan, which in turn would be utilized as prebiotics carrying manifold health benefits.</text>
</comment>
<comment type="similarity">
    <text evidence="5">Belongs to the glycosyl hydrolase 30 family.</text>
</comment>
<feature type="signal peptide" evidence="1">
    <location>
        <begin position="1"/>
        <end position="19"/>
    </location>
</feature>
<feature type="chain" id="PRO_5003435145" description="GH30 family xylanase">
    <location>
        <begin position="20"/>
        <end position="477"/>
    </location>
</feature>
<feature type="glycosylation site" description="N-linked (GlcNAc...) asparagine" evidence="2">
    <location>
        <position position="194"/>
    </location>
</feature>
<feature type="glycosylation site" description="N-linked (GlcNAc...) asparagine" evidence="2">
    <location>
        <position position="237"/>
    </location>
</feature>
<feature type="glycosylation site" description="N-linked (GlcNAc...) asparagine" evidence="2">
    <location>
        <position position="331"/>
    </location>
</feature>
<feature type="strand" evidence="9">
    <location>
        <begin position="26"/>
        <end position="40"/>
    </location>
</feature>
<feature type="strand" evidence="9">
    <location>
        <begin position="42"/>
        <end position="46"/>
    </location>
</feature>
<feature type="turn" evidence="9">
    <location>
        <begin position="48"/>
        <end position="50"/>
    </location>
</feature>
<feature type="helix" evidence="9">
    <location>
        <begin position="51"/>
        <end position="56"/>
    </location>
</feature>
<feature type="helix" evidence="9">
    <location>
        <begin position="60"/>
        <end position="71"/>
    </location>
</feature>
<feature type="turn" evidence="9">
    <location>
        <begin position="73"/>
        <end position="75"/>
    </location>
</feature>
<feature type="strand" evidence="9">
    <location>
        <begin position="81"/>
        <end position="85"/>
    </location>
</feature>
<feature type="strand" evidence="9">
    <location>
        <begin position="89"/>
        <end position="91"/>
    </location>
</feature>
<feature type="turn" evidence="9">
    <location>
        <begin position="120"/>
        <end position="122"/>
    </location>
</feature>
<feature type="helix" evidence="9">
    <location>
        <begin position="123"/>
        <end position="132"/>
    </location>
</feature>
<feature type="strand" evidence="9">
    <location>
        <begin position="138"/>
        <end position="142"/>
    </location>
</feature>
<feature type="helix" evidence="9">
    <location>
        <begin position="148"/>
        <end position="150"/>
    </location>
</feature>
<feature type="strand" evidence="9">
    <location>
        <begin position="154"/>
        <end position="158"/>
    </location>
</feature>
<feature type="helix" evidence="9">
    <location>
        <begin position="176"/>
        <end position="192"/>
    </location>
</feature>
<feature type="strand" evidence="9">
    <location>
        <begin position="199"/>
        <end position="202"/>
    </location>
</feature>
<feature type="strand" evidence="9">
    <location>
        <begin position="211"/>
        <end position="213"/>
    </location>
</feature>
<feature type="helix" evidence="9">
    <location>
        <begin position="219"/>
        <end position="235"/>
    </location>
</feature>
<feature type="strand" evidence="9">
    <location>
        <begin position="243"/>
        <end position="251"/>
    </location>
</feature>
<feature type="helix" evidence="9">
    <location>
        <begin position="252"/>
        <end position="256"/>
    </location>
</feature>
<feature type="helix" evidence="9">
    <location>
        <begin position="259"/>
        <end position="262"/>
    </location>
</feature>
<feature type="helix" evidence="9">
    <location>
        <begin position="263"/>
        <end position="265"/>
    </location>
</feature>
<feature type="turn" evidence="8">
    <location>
        <begin position="266"/>
        <end position="268"/>
    </location>
</feature>
<feature type="strand" evidence="9">
    <location>
        <begin position="271"/>
        <end position="279"/>
    </location>
</feature>
<feature type="strand" evidence="9">
    <location>
        <begin position="291"/>
        <end position="295"/>
    </location>
</feature>
<feature type="strand" evidence="9">
    <location>
        <begin position="298"/>
        <end position="302"/>
    </location>
</feature>
<feature type="strand" evidence="9">
    <location>
        <begin position="309"/>
        <end position="311"/>
    </location>
</feature>
<feature type="helix" evidence="9">
    <location>
        <begin position="316"/>
        <end position="328"/>
    </location>
</feature>
<feature type="strand" evidence="9">
    <location>
        <begin position="333"/>
        <end position="342"/>
    </location>
</feature>
<feature type="strand" evidence="9">
    <location>
        <begin position="344"/>
        <end position="347"/>
    </location>
</feature>
<feature type="strand" evidence="9">
    <location>
        <begin position="349"/>
        <end position="354"/>
    </location>
</feature>
<feature type="turn" evidence="9">
    <location>
        <begin position="355"/>
        <end position="358"/>
    </location>
</feature>
<feature type="strand" evidence="9">
    <location>
        <begin position="359"/>
        <end position="362"/>
    </location>
</feature>
<feature type="helix" evidence="9">
    <location>
        <begin position="364"/>
        <end position="373"/>
    </location>
</feature>
<feature type="strand" evidence="9">
    <location>
        <begin position="380"/>
        <end position="386"/>
    </location>
</feature>
<feature type="strand" evidence="9">
    <location>
        <begin position="392"/>
        <end position="398"/>
    </location>
</feature>
<feature type="strand" evidence="9">
    <location>
        <begin position="404"/>
        <end position="410"/>
    </location>
</feature>
<feature type="strand" evidence="9">
    <location>
        <begin position="415"/>
        <end position="421"/>
    </location>
</feature>
<feature type="turn" evidence="7">
    <location>
        <begin position="427"/>
        <end position="429"/>
    </location>
</feature>
<feature type="strand" evidence="9">
    <location>
        <begin position="432"/>
        <end position="442"/>
    </location>
</feature>
<feature type="strand" evidence="9">
    <location>
        <begin position="444"/>
        <end position="448"/>
    </location>
</feature>
<feature type="strand" evidence="9">
    <location>
        <begin position="451"/>
        <end position="453"/>
    </location>
</feature>
<feature type="strand" evidence="9">
    <location>
        <begin position="456"/>
        <end position="461"/>
    </location>
</feature>
<feature type="strand" evidence="9">
    <location>
        <begin position="465"/>
        <end position="472"/>
    </location>
</feature>
<evidence type="ECO:0000255" key="1"/>
<evidence type="ECO:0000255" key="2">
    <source>
        <dbReference type="PROSITE-ProRule" id="PRU00498"/>
    </source>
</evidence>
<evidence type="ECO:0000269" key="3">
    <source>
    </source>
</evidence>
<evidence type="ECO:0000303" key="4">
    <source>
    </source>
</evidence>
<evidence type="ECO:0000305" key="5"/>
<evidence type="ECO:0000305" key="6">
    <source>
    </source>
</evidence>
<evidence type="ECO:0007829" key="7">
    <source>
        <dbReference type="PDB" id="8C48"/>
    </source>
</evidence>
<evidence type="ECO:0007829" key="8">
    <source>
        <dbReference type="PDB" id="8CBC"/>
    </source>
</evidence>
<evidence type="ECO:0007829" key="9">
    <source>
        <dbReference type="PDB" id="8P67"/>
    </source>
</evidence>
<name>XY30A_THET4</name>
<protein>
    <recommendedName>
        <fullName evidence="4">GH30 family xylanase</fullName>
        <ecNumber evidence="3">3.2.1.-</ecNumber>
    </recommendedName>
</protein>